<name>RP19_VACCW</name>
<proteinExistence type="evidence at protein level"/>
<feature type="chain" id="PRO_0000099147" description="DNA-directed RNA polymerase 19 kDa subunit">
    <location>
        <begin position="1"/>
        <end position="164"/>
    </location>
</feature>
<feature type="region of interest" description="Disordered" evidence="2">
    <location>
        <begin position="1"/>
        <end position="39"/>
    </location>
</feature>
<feature type="compositionally biased region" description="Acidic residues" evidence="2">
    <location>
        <begin position="1"/>
        <end position="35"/>
    </location>
</feature>
<accession>P68611</accession>
<accession>P20984</accession>
<organismHost>
    <name type="scientific">Bos taurus</name>
    <name type="common">Bovine</name>
    <dbReference type="NCBI Taxonomy" id="9913"/>
</organismHost>
<protein>
    <recommendedName>
        <fullName>DNA-directed RNA polymerase 19 kDa subunit</fullName>
        <ecNumber>2.7.7.6</ecNumber>
    </recommendedName>
</protein>
<sequence length="164" mass="18996">MADTDDIIDYESDDLTEYEDDEEEEEDGESLETSDIDPKSSYKIVESASTHIEDAHSNLKHIGNHISALKRRYTRRISLFEIAGIIAESYNLLQRGRLPLVSEFSDETMKQNMLHVIIQEIEEGSCPIVIEKNGELLSVNDFDKDGLKFHLDYIIKIWKLQKRY</sequence>
<comment type="function">
    <text evidence="1">Part of the DNA-dependent RNA polymerase which catalyzes the transcription of viral DNA into RNA using the four ribonucleoside triphosphates as substrates. Responsible for the transcription of early, intermediate and late genes. DNA-dependent RNA polymerase associates with the early transcription factor (ETF), itself composed of OPG118 and OPG133, thereby allowing the early genes transcription. Late transcription, and probably also intermediate transcription, require newly synthesized RNA polymerase.</text>
</comment>
<comment type="catalytic activity">
    <reaction>
        <text>RNA(n) + a ribonucleoside 5'-triphosphate = RNA(n+1) + diphosphate</text>
        <dbReference type="Rhea" id="RHEA:21248"/>
        <dbReference type="Rhea" id="RHEA-COMP:14527"/>
        <dbReference type="Rhea" id="RHEA-COMP:17342"/>
        <dbReference type="ChEBI" id="CHEBI:33019"/>
        <dbReference type="ChEBI" id="CHEBI:61557"/>
        <dbReference type="ChEBI" id="CHEBI:140395"/>
        <dbReference type="EC" id="2.7.7.6"/>
    </reaction>
</comment>
<comment type="subunit">
    <text evidence="1">The DNA-dependent RNA polymerase used for intermediate and late genes expression consists of eight subunits Rpo30/OPG66, Rpo7/OPG90, Rpo22/OPG103, Rpo147/OPG105, Rpo18/OPG119, Rpo19/OPG131, Rpo132/OPG151 and Rpo35/OPG156. The same holoenzyme, with the addition of the transcription-specificity factor OPG109, is used for early gene expression.</text>
</comment>
<comment type="subcellular location">
    <subcellularLocation>
        <location evidence="1">Virion</location>
    </subcellularLocation>
    <text evidence="1">All the enzymes and other proteins required to synthesize early mRNAs are packaged within the virion core along with the DNA genome. This is necessary because viral early mRNAs are synthesized within minutes after virus entry into the cell and are extruded through pores in the core particle.</text>
</comment>
<comment type="induction">
    <text evidence="3">Expressed in the early phase of the viral replicative cycle. Expression seems to continue throughout virus infection.</text>
</comment>
<comment type="similarity">
    <text evidence="4">Belongs to the poxviridae DNA-directed RNA polymerase 19 kDa subunit family.</text>
</comment>
<gene>
    <name type="primary">OPG131</name>
    <name type="synonym">RPO19</name>
    <name type="ordered locus">VACWR124</name>
    <name type="ORF">A5R</name>
</gene>
<keyword id="KW-0002">3D-structure</keyword>
<keyword id="KW-0903">Direct protein sequencing</keyword>
<keyword id="KW-0240">DNA-directed RNA polymerase</keyword>
<keyword id="KW-0244">Early protein</keyword>
<keyword id="KW-0548">Nucleotidyltransferase</keyword>
<keyword id="KW-1185">Reference proteome</keyword>
<keyword id="KW-0804">Transcription</keyword>
<keyword id="KW-0808">Transferase</keyword>
<keyword id="KW-0946">Virion</keyword>
<organism>
    <name type="scientific">Vaccinia virus (strain Western Reserve)</name>
    <name type="common">VACV</name>
    <name type="synonym">Vaccinia virus (strain WR)</name>
    <dbReference type="NCBI Taxonomy" id="10254"/>
    <lineage>
        <taxon>Viruses</taxon>
        <taxon>Varidnaviria</taxon>
        <taxon>Bamfordvirae</taxon>
        <taxon>Nucleocytoviricota</taxon>
        <taxon>Pokkesviricetes</taxon>
        <taxon>Chitovirales</taxon>
        <taxon>Poxviridae</taxon>
        <taxon>Chordopoxvirinae</taxon>
        <taxon>Orthopoxvirus</taxon>
        <taxon>Vaccinia virus</taxon>
    </lineage>
</organism>
<evidence type="ECO:0000250" key="1">
    <source>
        <dbReference type="UniProtKB" id="Q76ZQ8"/>
    </source>
</evidence>
<evidence type="ECO:0000256" key="2">
    <source>
        <dbReference type="SAM" id="MobiDB-lite"/>
    </source>
</evidence>
<evidence type="ECO:0000269" key="3">
    <source>
    </source>
</evidence>
<evidence type="ECO:0000305" key="4"/>
<dbReference type="EC" id="2.7.7.6"/>
<dbReference type="EMBL" id="M76473">
    <property type="protein sequence ID" value="AAA48337.1"/>
    <property type="molecule type" value="Genomic_DNA"/>
</dbReference>
<dbReference type="EMBL" id="AY243312">
    <property type="protein sequence ID" value="AAO89403.1"/>
    <property type="molecule type" value="Genomic_DNA"/>
</dbReference>
<dbReference type="PIR" id="B41806">
    <property type="entry name" value="RNVZ19"/>
</dbReference>
<dbReference type="RefSeq" id="YP_233006.1">
    <property type="nucleotide sequence ID" value="NC_006998.1"/>
</dbReference>
<dbReference type="PDB" id="8C8H">
    <property type="method" value="EM"/>
    <property type="resolution" value="3.84 A"/>
    <property type="chains" value="F=1-164"/>
</dbReference>
<dbReference type="PDBsum" id="8C8H"/>
<dbReference type="EMDB" id="EMD-16476"/>
<dbReference type="SMR" id="P68611"/>
<dbReference type="DNASU" id="3707522"/>
<dbReference type="GeneID" id="3707522"/>
<dbReference type="KEGG" id="vg:3707522"/>
<dbReference type="Proteomes" id="UP000000344">
    <property type="component" value="Genome"/>
</dbReference>
<dbReference type="GO" id="GO:0000428">
    <property type="term" value="C:DNA-directed RNA polymerase complex"/>
    <property type="evidence" value="ECO:0007669"/>
    <property type="project" value="UniProtKB-KW"/>
</dbReference>
<dbReference type="GO" id="GO:0044423">
    <property type="term" value="C:virion component"/>
    <property type="evidence" value="ECO:0007669"/>
    <property type="project" value="UniProtKB-KW"/>
</dbReference>
<dbReference type="GO" id="GO:0003677">
    <property type="term" value="F:DNA binding"/>
    <property type="evidence" value="ECO:0007669"/>
    <property type="project" value="InterPro"/>
</dbReference>
<dbReference type="GO" id="GO:0003899">
    <property type="term" value="F:DNA-directed RNA polymerase activity"/>
    <property type="evidence" value="ECO:0007669"/>
    <property type="project" value="UniProtKB-EC"/>
</dbReference>
<dbReference type="GO" id="GO:0006351">
    <property type="term" value="P:DNA-templated transcription"/>
    <property type="evidence" value="ECO:0007669"/>
    <property type="project" value="InterPro"/>
</dbReference>
<dbReference type="Gene3D" id="3.90.940.10">
    <property type="match status" value="1"/>
</dbReference>
<dbReference type="InterPro" id="IPR007984">
    <property type="entry name" value="DNA-dir_RNA_Pol_19kDa_poxvir"/>
</dbReference>
<dbReference type="InterPro" id="IPR036161">
    <property type="entry name" value="RPB6/omega-like_sf"/>
</dbReference>
<dbReference type="Pfam" id="PF05320">
    <property type="entry name" value="Pox_RNA_Pol_19"/>
    <property type="match status" value="1"/>
</dbReference>
<dbReference type="PIRSF" id="PIRSF000743">
    <property type="entry name" value="RPO19"/>
    <property type="match status" value="1"/>
</dbReference>
<reference key="1">
    <citation type="journal article" date="1992" name="J. Virol.">
        <title>Identification and expression of rpo19, a vaccinia virus gene encoding a 19-kilodalton DNA-dependent RNA polymerase subunit.</title>
        <authorList>
            <person name="Ahn B.-Y."/>
            <person name="Rosel J."/>
            <person name="Cole N.B."/>
            <person name="Moss B."/>
        </authorList>
    </citation>
    <scope>NUCLEOTIDE SEQUENCE [GENOMIC DNA]</scope>
    <scope>PARTIAL PROTEIN SEQUENCE</scope>
    <scope>IDENTIFICATION</scope>
    <scope>INDUCTION</scope>
</reference>
<reference key="2">
    <citation type="submission" date="2003-02" db="EMBL/GenBank/DDBJ databases">
        <title>Sequencing of the coding region of Vaccinia-WR to an average 9-fold redundancy and an error rate of 0.16/10kb.</title>
        <authorList>
            <person name="Esposito J.J."/>
            <person name="Frace A.M."/>
            <person name="Sammons S.A."/>
            <person name="Olsen-Rasmussen M."/>
            <person name="Osborne J."/>
            <person name="Wohlhueter R."/>
        </authorList>
    </citation>
    <scope>NUCLEOTIDE SEQUENCE [LARGE SCALE GENOMIC DNA]</scope>
</reference>
<reference key="3">
    <citation type="journal article" date="2003" name="J. Gen. Virol.">
        <title>Vaccinia virus transcription.</title>
        <authorList>
            <person name="Broyles S.S."/>
        </authorList>
    </citation>
    <scope>REVIEW</scope>
</reference>